<feature type="chain" id="PRO_1000193515" description="Peptide chain release factor 3">
    <location>
        <begin position="1"/>
        <end position="526"/>
    </location>
</feature>
<feature type="domain" description="tr-type G">
    <location>
        <begin position="11"/>
        <end position="277"/>
    </location>
</feature>
<feature type="binding site" evidence="1">
    <location>
        <begin position="20"/>
        <end position="27"/>
    </location>
    <ligand>
        <name>GTP</name>
        <dbReference type="ChEBI" id="CHEBI:37565"/>
    </ligand>
</feature>
<feature type="binding site" evidence="1">
    <location>
        <begin position="88"/>
        <end position="92"/>
    </location>
    <ligand>
        <name>GTP</name>
        <dbReference type="ChEBI" id="CHEBI:37565"/>
    </ligand>
</feature>
<feature type="binding site" evidence="1">
    <location>
        <begin position="142"/>
        <end position="145"/>
    </location>
    <ligand>
        <name>GTP</name>
        <dbReference type="ChEBI" id="CHEBI:37565"/>
    </ligand>
</feature>
<evidence type="ECO:0000255" key="1">
    <source>
        <dbReference type="HAMAP-Rule" id="MF_00072"/>
    </source>
</evidence>
<organism>
    <name type="scientific">Buchnera aphidicola subsp. Acyrthosiphon pisum (strain 5A)</name>
    <dbReference type="NCBI Taxonomy" id="563178"/>
    <lineage>
        <taxon>Bacteria</taxon>
        <taxon>Pseudomonadati</taxon>
        <taxon>Pseudomonadota</taxon>
        <taxon>Gammaproteobacteria</taxon>
        <taxon>Enterobacterales</taxon>
        <taxon>Erwiniaceae</taxon>
        <taxon>Buchnera</taxon>
    </lineage>
</organism>
<proteinExistence type="inferred from homology"/>
<reference key="1">
    <citation type="journal article" date="2009" name="Science">
        <title>The dynamics and time scale of ongoing genomic erosion in symbiotic bacteria.</title>
        <authorList>
            <person name="Moran N.A."/>
            <person name="McLaughlin H.J."/>
            <person name="Sorek R."/>
        </authorList>
    </citation>
    <scope>NUCLEOTIDE SEQUENCE [LARGE SCALE GENOMIC DNA]</scope>
    <source>
        <strain>5A</strain>
    </source>
</reference>
<protein>
    <recommendedName>
        <fullName evidence="1">Peptide chain release factor 3</fullName>
        <shortName evidence="1">RF-3</shortName>
    </recommendedName>
</protein>
<gene>
    <name evidence="1" type="primary">prfC</name>
    <name type="ordered locus">BUAP5A_536</name>
</gene>
<dbReference type="EMBL" id="CP001161">
    <property type="protein sequence ID" value="ACL30886.1"/>
    <property type="molecule type" value="Genomic_DNA"/>
</dbReference>
<dbReference type="RefSeq" id="WP_009874493.1">
    <property type="nucleotide sequence ID" value="NC_011833.1"/>
</dbReference>
<dbReference type="SMR" id="B8D9W5"/>
<dbReference type="KEGG" id="bap:BUAP5A_536"/>
<dbReference type="HOGENOM" id="CLU_002794_2_1_6"/>
<dbReference type="OrthoDB" id="9804431at2"/>
<dbReference type="Proteomes" id="UP000006904">
    <property type="component" value="Chromosome"/>
</dbReference>
<dbReference type="GO" id="GO:0005829">
    <property type="term" value="C:cytosol"/>
    <property type="evidence" value="ECO:0007669"/>
    <property type="project" value="TreeGrafter"/>
</dbReference>
<dbReference type="GO" id="GO:0005525">
    <property type="term" value="F:GTP binding"/>
    <property type="evidence" value="ECO:0007669"/>
    <property type="project" value="UniProtKB-UniRule"/>
</dbReference>
<dbReference type="GO" id="GO:0003924">
    <property type="term" value="F:GTPase activity"/>
    <property type="evidence" value="ECO:0007669"/>
    <property type="project" value="InterPro"/>
</dbReference>
<dbReference type="GO" id="GO:0097216">
    <property type="term" value="F:guanosine tetraphosphate binding"/>
    <property type="evidence" value="ECO:0007669"/>
    <property type="project" value="UniProtKB-ARBA"/>
</dbReference>
<dbReference type="GO" id="GO:0016150">
    <property type="term" value="F:translation release factor activity, codon nonspecific"/>
    <property type="evidence" value="ECO:0007669"/>
    <property type="project" value="TreeGrafter"/>
</dbReference>
<dbReference type="GO" id="GO:0016149">
    <property type="term" value="F:translation release factor activity, codon specific"/>
    <property type="evidence" value="ECO:0007669"/>
    <property type="project" value="UniProtKB-UniRule"/>
</dbReference>
<dbReference type="GO" id="GO:0006449">
    <property type="term" value="P:regulation of translational termination"/>
    <property type="evidence" value="ECO:0007669"/>
    <property type="project" value="UniProtKB-UniRule"/>
</dbReference>
<dbReference type="CDD" id="cd04169">
    <property type="entry name" value="RF3"/>
    <property type="match status" value="1"/>
</dbReference>
<dbReference type="CDD" id="cd16259">
    <property type="entry name" value="RF3_III"/>
    <property type="match status" value="1"/>
</dbReference>
<dbReference type="FunFam" id="3.30.70.3280:FF:000001">
    <property type="entry name" value="Peptide chain release factor 3"/>
    <property type="match status" value="1"/>
</dbReference>
<dbReference type="FunFam" id="3.40.50.300:FF:000542">
    <property type="entry name" value="Peptide chain release factor 3"/>
    <property type="match status" value="1"/>
</dbReference>
<dbReference type="Gene3D" id="3.40.50.300">
    <property type="entry name" value="P-loop containing nucleotide triphosphate hydrolases"/>
    <property type="match status" value="1"/>
</dbReference>
<dbReference type="Gene3D" id="3.30.70.3280">
    <property type="entry name" value="Peptide chain release factor 3, domain III"/>
    <property type="match status" value="1"/>
</dbReference>
<dbReference type="Gene3D" id="2.40.30.10">
    <property type="entry name" value="Translation factors"/>
    <property type="match status" value="1"/>
</dbReference>
<dbReference type="HAMAP" id="MF_00072">
    <property type="entry name" value="Rel_fac_3"/>
    <property type="match status" value="1"/>
</dbReference>
<dbReference type="InterPro" id="IPR053905">
    <property type="entry name" value="EF-G-like_DII"/>
</dbReference>
<dbReference type="InterPro" id="IPR035647">
    <property type="entry name" value="EFG_III/V"/>
</dbReference>
<dbReference type="InterPro" id="IPR031157">
    <property type="entry name" value="G_TR_CS"/>
</dbReference>
<dbReference type="InterPro" id="IPR027417">
    <property type="entry name" value="P-loop_NTPase"/>
</dbReference>
<dbReference type="InterPro" id="IPR004548">
    <property type="entry name" value="PrfC"/>
</dbReference>
<dbReference type="InterPro" id="IPR032090">
    <property type="entry name" value="RF3_C"/>
</dbReference>
<dbReference type="InterPro" id="IPR038467">
    <property type="entry name" value="RF3_dom_3_sf"/>
</dbReference>
<dbReference type="InterPro" id="IPR041732">
    <property type="entry name" value="RF3_GTP-bd"/>
</dbReference>
<dbReference type="InterPro" id="IPR005225">
    <property type="entry name" value="Small_GTP-bd"/>
</dbReference>
<dbReference type="InterPro" id="IPR000795">
    <property type="entry name" value="T_Tr_GTP-bd_dom"/>
</dbReference>
<dbReference type="InterPro" id="IPR009000">
    <property type="entry name" value="Transl_B-barrel_sf"/>
</dbReference>
<dbReference type="NCBIfam" id="TIGR00503">
    <property type="entry name" value="prfC"/>
    <property type="match status" value="1"/>
</dbReference>
<dbReference type="NCBIfam" id="NF001964">
    <property type="entry name" value="PRK00741.1"/>
    <property type="match status" value="1"/>
</dbReference>
<dbReference type="NCBIfam" id="TIGR00231">
    <property type="entry name" value="small_GTP"/>
    <property type="match status" value="1"/>
</dbReference>
<dbReference type="PANTHER" id="PTHR43556">
    <property type="entry name" value="PEPTIDE CHAIN RELEASE FACTOR RF3"/>
    <property type="match status" value="1"/>
</dbReference>
<dbReference type="PANTHER" id="PTHR43556:SF2">
    <property type="entry name" value="PEPTIDE CHAIN RELEASE FACTOR RF3"/>
    <property type="match status" value="1"/>
</dbReference>
<dbReference type="Pfam" id="PF22042">
    <property type="entry name" value="EF-G_D2"/>
    <property type="match status" value="1"/>
</dbReference>
<dbReference type="Pfam" id="PF00009">
    <property type="entry name" value="GTP_EFTU"/>
    <property type="match status" value="1"/>
</dbReference>
<dbReference type="Pfam" id="PF16658">
    <property type="entry name" value="RF3_C"/>
    <property type="match status" value="1"/>
</dbReference>
<dbReference type="PRINTS" id="PR00315">
    <property type="entry name" value="ELONGATNFCT"/>
</dbReference>
<dbReference type="SUPFAM" id="SSF54980">
    <property type="entry name" value="EF-G C-terminal domain-like"/>
    <property type="match status" value="1"/>
</dbReference>
<dbReference type="SUPFAM" id="SSF52540">
    <property type="entry name" value="P-loop containing nucleoside triphosphate hydrolases"/>
    <property type="match status" value="1"/>
</dbReference>
<dbReference type="SUPFAM" id="SSF50447">
    <property type="entry name" value="Translation proteins"/>
    <property type="match status" value="1"/>
</dbReference>
<dbReference type="PROSITE" id="PS00301">
    <property type="entry name" value="G_TR_1"/>
    <property type="match status" value="1"/>
</dbReference>
<dbReference type="PROSITE" id="PS51722">
    <property type="entry name" value="G_TR_2"/>
    <property type="match status" value="1"/>
</dbReference>
<comment type="function">
    <text evidence="1">Increases the formation of ribosomal termination complexes and stimulates activities of RF-1 and RF-2. It binds guanine nucleotides and has strong preference for UGA stop codons. It may interact directly with the ribosome. The stimulation of RF-1 and RF-2 is significantly reduced by GTP and GDP, but not by GMP.</text>
</comment>
<comment type="subcellular location">
    <subcellularLocation>
        <location evidence="1">Cytoplasm</location>
    </subcellularLocation>
</comment>
<comment type="similarity">
    <text evidence="1">Belongs to the TRAFAC class translation factor GTPase superfamily. Classic translation factor GTPase family. PrfC subfamily.</text>
</comment>
<sequence>MFDSNHEQELSKRRTFAIISHPDAGKTTITEKMLFFGKVIRVPGTIKGRGSGKYAKSDWMNIEKERGISITTSVMQFTYKNILMNLLDTPGHQDFSEDTYRILTAVDCCLVVIDAAKGIEERTRKLMDVARIHNTPIITFINKLDRDSRDPIEILDEIEKELKLHCIPISWPISCGKNFQGVYHIYDKIIHLYKSKFRKNFLTLDSFLDGSLNEYLGADLSIHIRQELELIMNVYSKFNKEKFLKGITTPIFFGSALGNFGIDHLLDSLIKWAPSPLYRQSNKRIIKPQERKFTGFIFKIQANMDLKHRDRIAFMRIVSGQYTKGMKLTHVRIKKNIIISDAFSFLAGERISINKAYPGDVIGLHNHGTIKIGDTFTQGEEIKFIGIPSFAPEIFRLIYLKNPLKQKQLKKGLVQLSEEGTVQVFRPILNNDLILGAIGILQFDVVIERLRIEYNIDAVYKKVNIVLARWINCGNHHSLYNLKKSYSSYLAYDISNSLIYLAPSSANLNIVMSQNSDISFNATREQ</sequence>
<accession>B8D9W5</accession>
<keyword id="KW-0963">Cytoplasm</keyword>
<keyword id="KW-0342">GTP-binding</keyword>
<keyword id="KW-0547">Nucleotide-binding</keyword>
<keyword id="KW-0648">Protein biosynthesis</keyword>
<name>RF3_BUCA5</name>